<protein>
    <recommendedName>
        <fullName evidence="10">Large ribosomal subunit protein mL48</fullName>
    </recommendedName>
    <alternativeName>
        <fullName>39S ribosomal protein L48, mitochondrial</fullName>
        <shortName>L48mt</shortName>
        <shortName>MRP-L48</shortName>
    </alternativeName>
</protein>
<reference key="1">
    <citation type="journal article" date="2000" name="Genome Res.">
        <title>Identification of novel human genes evolutionarily conserved in Caenorhabditis elegans by comparative proteomics.</title>
        <authorList>
            <person name="Lai C.-H."/>
            <person name="Chou C.-Y."/>
            <person name="Ch'ang L.-Y."/>
            <person name="Liu C.-S."/>
            <person name="Lin W.-C."/>
        </authorList>
    </citation>
    <scope>NUCLEOTIDE SEQUENCE [LARGE SCALE MRNA] (ISOFORM 1)</scope>
</reference>
<reference key="2">
    <citation type="submission" date="1999-05" db="EMBL/GenBank/DDBJ databases">
        <title>Human partial CDS from CD34+ stem cells.</title>
        <authorList>
            <person name="Ye M."/>
            <person name="Zhang Q.-H."/>
            <person name="Zhou J."/>
            <person name="Shen Y."/>
            <person name="Wu X.-Y."/>
            <person name="Guan Z.Q."/>
            <person name="Wang L."/>
            <person name="Fan H.-Y."/>
            <person name="Mao Y.-F."/>
            <person name="Dai M."/>
            <person name="Huang Q.-H."/>
            <person name="Chen S.-J."/>
            <person name="Chen Z."/>
        </authorList>
    </citation>
    <scope>NUCLEOTIDE SEQUENCE [LARGE SCALE MRNA] (ISOFORM 1)</scope>
    <source>
        <tissue>Umbilical cord blood</tissue>
    </source>
</reference>
<reference key="3">
    <citation type="journal article" date="2004" name="Nat. Genet.">
        <title>Complete sequencing and characterization of 21,243 full-length human cDNAs.</title>
        <authorList>
            <person name="Ota T."/>
            <person name="Suzuki Y."/>
            <person name="Nishikawa T."/>
            <person name="Otsuki T."/>
            <person name="Sugiyama T."/>
            <person name="Irie R."/>
            <person name="Wakamatsu A."/>
            <person name="Hayashi K."/>
            <person name="Sato H."/>
            <person name="Nagai K."/>
            <person name="Kimura K."/>
            <person name="Makita H."/>
            <person name="Sekine M."/>
            <person name="Obayashi M."/>
            <person name="Nishi T."/>
            <person name="Shibahara T."/>
            <person name="Tanaka T."/>
            <person name="Ishii S."/>
            <person name="Yamamoto J."/>
            <person name="Saito K."/>
            <person name="Kawai Y."/>
            <person name="Isono Y."/>
            <person name="Nakamura Y."/>
            <person name="Nagahari K."/>
            <person name="Murakami K."/>
            <person name="Yasuda T."/>
            <person name="Iwayanagi T."/>
            <person name="Wagatsuma M."/>
            <person name="Shiratori A."/>
            <person name="Sudo H."/>
            <person name="Hosoiri T."/>
            <person name="Kaku Y."/>
            <person name="Kodaira H."/>
            <person name="Kondo H."/>
            <person name="Sugawara M."/>
            <person name="Takahashi M."/>
            <person name="Kanda K."/>
            <person name="Yokoi T."/>
            <person name="Furuya T."/>
            <person name="Kikkawa E."/>
            <person name="Omura Y."/>
            <person name="Abe K."/>
            <person name="Kamihara K."/>
            <person name="Katsuta N."/>
            <person name="Sato K."/>
            <person name="Tanikawa M."/>
            <person name="Yamazaki M."/>
            <person name="Ninomiya K."/>
            <person name="Ishibashi T."/>
            <person name="Yamashita H."/>
            <person name="Murakawa K."/>
            <person name="Fujimori K."/>
            <person name="Tanai H."/>
            <person name="Kimata M."/>
            <person name="Watanabe M."/>
            <person name="Hiraoka S."/>
            <person name="Chiba Y."/>
            <person name="Ishida S."/>
            <person name="Ono Y."/>
            <person name="Takiguchi S."/>
            <person name="Watanabe S."/>
            <person name="Yosida M."/>
            <person name="Hotuta T."/>
            <person name="Kusano J."/>
            <person name="Kanehori K."/>
            <person name="Takahashi-Fujii A."/>
            <person name="Hara H."/>
            <person name="Tanase T.-O."/>
            <person name="Nomura Y."/>
            <person name="Togiya S."/>
            <person name="Komai F."/>
            <person name="Hara R."/>
            <person name="Takeuchi K."/>
            <person name="Arita M."/>
            <person name="Imose N."/>
            <person name="Musashino K."/>
            <person name="Yuuki H."/>
            <person name="Oshima A."/>
            <person name="Sasaki N."/>
            <person name="Aotsuka S."/>
            <person name="Yoshikawa Y."/>
            <person name="Matsunawa H."/>
            <person name="Ichihara T."/>
            <person name="Shiohata N."/>
            <person name="Sano S."/>
            <person name="Moriya S."/>
            <person name="Momiyama H."/>
            <person name="Satoh N."/>
            <person name="Takami S."/>
            <person name="Terashima Y."/>
            <person name="Suzuki O."/>
            <person name="Nakagawa S."/>
            <person name="Senoh A."/>
            <person name="Mizoguchi H."/>
            <person name="Goto Y."/>
            <person name="Shimizu F."/>
            <person name="Wakebe H."/>
            <person name="Hishigaki H."/>
            <person name="Watanabe T."/>
            <person name="Sugiyama A."/>
            <person name="Takemoto M."/>
            <person name="Kawakami B."/>
            <person name="Yamazaki M."/>
            <person name="Watanabe K."/>
            <person name="Kumagai A."/>
            <person name="Itakura S."/>
            <person name="Fukuzumi Y."/>
            <person name="Fujimori Y."/>
            <person name="Komiyama M."/>
            <person name="Tashiro H."/>
            <person name="Tanigami A."/>
            <person name="Fujiwara T."/>
            <person name="Ono T."/>
            <person name="Yamada K."/>
            <person name="Fujii Y."/>
            <person name="Ozaki K."/>
            <person name="Hirao M."/>
            <person name="Ohmori Y."/>
            <person name="Kawabata A."/>
            <person name="Hikiji T."/>
            <person name="Kobatake N."/>
            <person name="Inagaki H."/>
            <person name="Ikema Y."/>
            <person name="Okamoto S."/>
            <person name="Okitani R."/>
            <person name="Kawakami T."/>
            <person name="Noguchi S."/>
            <person name="Itoh T."/>
            <person name="Shigeta K."/>
            <person name="Senba T."/>
            <person name="Matsumura K."/>
            <person name="Nakajima Y."/>
            <person name="Mizuno T."/>
            <person name="Morinaga M."/>
            <person name="Sasaki M."/>
            <person name="Togashi T."/>
            <person name="Oyama M."/>
            <person name="Hata H."/>
            <person name="Watanabe M."/>
            <person name="Komatsu T."/>
            <person name="Mizushima-Sugano J."/>
            <person name="Satoh T."/>
            <person name="Shirai Y."/>
            <person name="Takahashi Y."/>
            <person name="Nakagawa K."/>
            <person name="Okumura K."/>
            <person name="Nagase T."/>
            <person name="Nomura N."/>
            <person name="Kikuchi H."/>
            <person name="Masuho Y."/>
            <person name="Yamashita R."/>
            <person name="Nakai K."/>
            <person name="Yada T."/>
            <person name="Nakamura Y."/>
            <person name="Ohara O."/>
            <person name="Isogai T."/>
            <person name="Sugano S."/>
        </authorList>
    </citation>
    <scope>NUCLEOTIDE SEQUENCE [LARGE SCALE MRNA] (ISOFORM 2)</scope>
</reference>
<reference key="4">
    <citation type="journal article" date="2006" name="Nature">
        <title>Human chromosome 11 DNA sequence and analysis including novel gene identification.</title>
        <authorList>
            <person name="Taylor T.D."/>
            <person name="Noguchi H."/>
            <person name="Totoki Y."/>
            <person name="Toyoda A."/>
            <person name="Kuroki Y."/>
            <person name="Dewar K."/>
            <person name="Lloyd C."/>
            <person name="Itoh T."/>
            <person name="Takeda T."/>
            <person name="Kim D.-W."/>
            <person name="She X."/>
            <person name="Barlow K.F."/>
            <person name="Bloom T."/>
            <person name="Bruford E."/>
            <person name="Chang J.L."/>
            <person name="Cuomo C.A."/>
            <person name="Eichler E."/>
            <person name="FitzGerald M.G."/>
            <person name="Jaffe D.B."/>
            <person name="LaButti K."/>
            <person name="Nicol R."/>
            <person name="Park H.-S."/>
            <person name="Seaman C."/>
            <person name="Sougnez C."/>
            <person name="Yang X."/>
            <person name="Zimmer A.R."/>
            <person name="Zody M.C."/>
            <person name="Birren B.W."/>
            <person name="Nusbaum C."/>
            <person name="Fujiyama A."/>
            <person name="Hattori M."/>
            <person name="Rogers J."/>
            <person name="Lander E.S."/>
            <person name="Sakaki Y."/>
        </authorList>
    </citation>
    <scope>NUCLEOTIDE SEQUENCE [LARGE SCALE GENOMIC DNA]</scope>
</reference>
<reference key="5">
    <citation type="journal article" date="2004" name="Genome Res.">
        <title>The status, quality, and expansion of the NIH full-length cDNA project: the Mammalian Gene Collection (MGC).</title>
        <authorList>
            <consortium name="The MGC Project Team"/>
        </authorList>
    </citation>
    <scope>NUCLEOTIDE SEQUENCE [LARGE SCALE MRNA] (ISOFORM 1)</scope>
    <scope>VARIANT GLY-6</scope>
    <source>
        <tissue>Urinary bladder</tissue>
    </source>
</reference>
<reference key="6">
    <citation type="journal article" date="2011" name="BMC Syst. Biol.">
        <title>Initial characterization of the human central proteome.</title>
        <authorList>
            <person name="Burkard T.R."/>
            <person name="Planyavsky M."/>
            <person name="Kaupe I."/>
            <person name="Breitwieser F.P."/>
            <person name="Buerckstuemmer T."/>
            <person name="Bennett K.L."/>
            <person name="Superti-Furga G."/>
            <person name="Colinge J."/>
        </authorList>
    </citation>
    <scope>IDENTIFICATION BY MASS SPECTROMETRY [LARGE SCALE ANALYSIS]</scope>
</reference>
<reference key="7">
    <citation type="journal article" date="2015" name="Proteomics">
        <title>N-terminome analysis of the human mitochondrial proteome.</title>
        <authorList>
            <person name="Vaca Jacome A.S."/>
            <person name="Rabilloud T."/>
            <person name="Schaeffer-Reiss C."/>
            <person name="Rompais M."/>
            <person name="Ayoub D."/>
            <person name="Lane L."/>
            <person name="Bairoch A."/>
            <person name="Van Dorsselaer A."/>
            <person name="Carapito C."/>
        </authorList>
    </citation>
    <scope>IDENTIFICATION BY MASS SPECTROMETRY [LARGE SCALE ANALYSIS]</scope>
</reference>
<reference evidence="12" key="8">
    <citation type="journal article" date="2014" name="Science">
        <title>Structure of the large ribosomal subunit from human mitochondria.</title>
        <authorList>
            <person name="Brown A."/>
            <person name="Amunts A."/>
            <person name="Bai X.C."/>
            <person name="Sugimoto Y."/>
            <person name="Edwards P.C."/>
            <person name="Murshudov G."/>
            <person name="Scheres S.H."/>
            <person name="Ramakrishnan V."/>
        </authorList>
    </citation>
    <scope>STRUCTURE BY ELECTRON MICROSCOPY (3.40 ANGSTROMS) OF 1-194</scope>
    <scope>SUBCELLULAR LOCATION</scope>
    <scope>SUBUNIT</scope>
</reference>
<reference evidence="13" key="9">
    <citation type="journal article" date="2015" name="Science">
        <title>Ribosome. The structure of the human mitochondrial ribosome.</title>
        <authorList>
            <person name="Amunts A."/>
            <person name="Brown A."/>
            <person name="Toots J."/>
            <person name="Scheres S.H."/>
            <person name="Ramakrishnan V."/>
        </authorList>
    </citation>
    <scope>STRUCTURE BY ELECTRON MICROSCOPY (3.50 ANGSTROMS) OF 1-194</scope>
    <scope>SUBCELLULAR LOCATION</scope>
    <scope>SUBUNIT</scope>
</reference>
<reference evidence="14 15" key="10">
    <citation type="journal article" date="2017" name="Nat. Struct. Mol. Biol.">
        <title>Structures of the human mitochondrial ribosome in native states of assembly.</title>
        <authorList>
            <person name="Brown A."/>
            <person name="Rathore S."/>
            <person name="Kimanius D."/>
            <person name="Aibara S."/>
            <person name="Bai X.C."/>
            <person name="Rorbach J."/>
            <person name="Amunts A."/>
            <person name="Ramakrishnan V."/>
        </authorList>
    </citation>
    <scope>STRUCTURE BY ELECTRON MICROSCOPY (3.03 ANGSTROMS)</scope>
    <scope>SUBCELLULAR LOCATION</scope>
    <scope>SUBUNIT</scope>
</reference>
<reference evidence="16" key="11">
    <citation type="journal article" date="2022" name="Nat. Commun.">
        <title>A late-stage assembly checkpoint of the human mitochondrial ribosome large subunit.</title>
        <authorList>
            <person name="Rebelo-Guiomar P."/>
            <person name="Pellegrino S."/>
            <person name="Dent K.C."/>
            <person name="Sas-Chen A."/>
            <person name="Miller-Fleming L."/>
            <person name="Garone C."/>
            <person name="Van Haute L."/>
            <person name="Rogan J.F."/>
            <person name="Dinan A."/>
            <person name="Firth A.E."/>
            <person name="Andrews B."/>
            <person name="Whitworth A.J."/>
            <person name="Schwartz S."/>
            <person name="Warren A.J."/>
            <person name="Minczuk M."/>
        </authorList>
    </citation>
    <scope>STRUCTURE BY ELECTRON MICROSCOPY (2.9 ANGSTROMS) IN COMPLEX WITH MTLSU</scope>
    <scope>SUBUNIT</scope>
</reference>
<name>RM48_HUMAN</name>
<proteinExistence type="evidence at protein level"/>
<sequence>MSGTLEKVLCLRNNTIFKQAFSLLRFRTSGEKPIYSVGGILLSISRPYKTKPTHGIGKYKHLIKAEEPKKKKGKVEVRAINLGTDYEYGVLNIHLTAYDMTLAESYAQYVHNLCNSLSIKVEESYAMPTKTIEVLQLQDQGSKMLLDSVLTTHERVVQISGLSATFAEIFLEIIQSSLPEGVRLSVKEHTEEDFKGRFKARPELEELLAKLK</sequence>
<comment type="subunit">
    <text evidence="1 5 6 7 8">Component of the mitochondrial large ribosomal subunit (mt-LSU) (PubMed:25278503, PubMed:25838379, PubMed:28892042, PubMed:35177605). Mature mammalian 55S mitochondrial ribosomes consist of a small (28S) and a large (39S) subunit. The 28S small subunit contains a 12S ribosomal RNA (12S mt-rRNA) and 30 different proteins. The 39S large subunit contains a 16S rRNA (16S mt-rRNA), a copy of mitochondrial valine transfer RNA (mt-tRNA(Val)), which plays an integral structural role, and 52 different proteins. mL48 is located at the central protuberance (PubMed:25278503, PubMed:25838379). Interacts with OXA1L (By similarity).</text>
</comment>
<comment type="subcellular location">
    <subcellularLocation>
        <location evidence="5 6 7">Mitochondrion</location>
    </subcellularLocation>
</comment>
<comment type="alternative products">
    <event type="alternative splicing"/>
    <isoform>
        <id>Q96GC5-1</id>
        <name>1</name>
        <sequence type="displayed"/>
    </isoform>
    <isoform>
        <id>Q96GC5-3</id>
        <name>2</name>
        <sequence type="described" ref="VSP_054130"/>
    </isoform>
</comment>
<comment type="similarity">
    <text evidence="11">Belongs to the mitochondrion-specific ribosomal protein mL48 family.</text>
</comment>
<comment type="sequence caution" evidence="11">
    <conflict type="erroneous initiation">
        <sequence resource="EMBL-CDS" id="AAF28968"/>
    </conflict>
</comment>
<evidence type="ECO:0000250" key="1">
    <source>
        <dbReference type="UniProtKB" id="Q2YDI5"/>
    </source>
</evidence>
<evidence type="ECO:0000250" key="2">
    <source>
        <dbReference type="UniProtKB" id="Q8JZS9"/>
    </source>
</evidence>
<evidence type="ECO:0000255" key="3"/>
<evidence type="ECO:0000269" key="4">
    <source>
    </source>
</evidence>
<evidence type="ECO:0000269" key="5">
    <source>
    </source>
</evidence>
<evidence type="ECO:0000269" key="6">
    <source>
    </source>
</evidence>
<evidence type="ECO:0000269" key="7">
    <source>
    </source>
</evidence>
<evidence type="ECO:0000269" key="8">
    <source>
    </source>
</evidence>
<evidence type="ECO:0000303" key="9">
    <source>
    </source>
</evidence>
<evidence type="ECO:0000303" key="10">
    <source>
    </source>
</evidence>
<evidence type="ECO:0000305" key="11"/>
<evidence type="ECO:0007744" key="12">
    <source>
        <dbReference type="PDB" id="3J7Y"/>
    </source>
</evidence>
<evidence type="ECO:0007744" key="13">
    <source>
        <dbReference type="PDB" id="3J9M"/>
    </source>
</evidence>
<evidence type="ECO:0007744" key="14">
    <source>
        <dbReference type="PDB" id="5OOL"/>
    </source>
</evidence>
<evidence type="ECO:0007744" key="15">
    <source>
        <dbReference type="PDB" id="5OOM"/>
    </source>
</evidence>
<evidence type="ECO:0007744" key="16">
    <source>
        <dbReference type="PDB" id="7QH7"/>
    </source>
</evidence>
<evidence type="ECO:0007829" key="17">
    <source>
        <dbReference type="PDB" id="7OF0"/>
    </source>
</evidence>
<evidence type="ECO:0007829" key="18">
    <source>
        <dbReference type="PDB" id="7OIA"/>
    </source>
</evidence>
<evidence type="ECO:0007829" key="19">
    <source>
        <dbReference type="PDB" id="7OIB"/>
    </source>
</evidence>
<evidence type="ECO:0007829" key="20">
    <source>
        <dbReference type="PDB" id="8QU5"/>
    </source>
</evidence>
<organism>
    <name type="scientific">Homo sapiens</name>
    <name type="common">Human</name>
    <dbReference type="NCBI Taxonomy" id="9606"/>
    <lineage>
        <taxon>Eukaryota</taxon>
        <taxon>Metazoa</taxon>
        <taxon>Chordata</taxon>
        <taxon>Craniata</taxon>
        <taxon>Vertebrata</taxon>
        <taxon>Euteleostomi</taxon>
        <taxon>Mammalia</taxon>
        <taxon>Eutheria</taxon>
        <taxon>Euarchontoglires</taxon>
        <taxon>Primates</taxon>
        <taxon>Haplorrhini</taxon>
        <taxon>Catarrhini</taxon>
        <taxon>Hominidae</taxon>
        <taxon>Homo</taxon>
    </lineage>
</organism>
<gene>
    <name type="primary">MRPL48</name>
    <name type="ORF">CGI-118</name>
    <name type="ORF">HSPC290</name>
</gene>
<dbReference type="EMBL" id="AF151876">
    <property type="protein sequence ID" value="AAD34113.1"/>
    <property type="molecule type" value="mRNA"/>
</dbReference>
<dbReference type="EMBL" id="AF161408">
    <property type="protein sequence ID" value="AAF28968.1"/>
    <property type="status" value="ALT_INIT"/>
    <property type="molecule type" value="mRNA"/>
</dbReference>
<dbReference type="EMBL" id="AK297746">
    <property type="protein sequence ID" value="BAG60096.1"/>
    <property type="molecule type" value="mRNA"/>
</dbReference>
<dbReference type="EMBL" id="AP002770">
    <property type="status" value="NOT_ANNOTATED_CDS"/>
    <property type="molecule type" value="Genomic_DNA"/>
</dbReference>
<dbReference type="EMBL" id="BC009764">
    <property type="protein sequence ID" value="AAH09764.1"/>
    <property type="molecule type" value="mRNA"/>
</dbReference>
<dbReference type="CCDS" id="CCDS44676.1">
    <molecule id="Q96GC5-1"/>
</dbReference>
<dbReference type="RefSeq" id="NP_001305427.1">
    <molecule id="Q96GC5-3"/>
    <property type="nucleotide sequence ID" value="NM_001318498.2"/>
</dbReference>
<dbReference type="RefSeq" id="NP_001305428.1">
    <property type="nucleotide sequence ID" value="NM_001318499.1"/>
</dbReference>
<dbReference type="RefSeq" id="NP_001305429.1">
    <property type="nucleotide sequence ID" value="NM_001318500.1"/>
</dbReference>
<dbReference type="RefSeq" id="NP_057139.1">
    <molecule id="Q96GC5-1"/>
    <property type="nucleotide sequence ID" value="NM_016055.6"/>
</dbReference>
<dbReference type="PDB" id="3J7Y">
    <property type="method" value="EM"/>
    <property type="resolution" value="3.40 A"/>
    <property type="chains" value="f=1-194"/>
</dbReference>
<dbReference type="PDB" id="3J9M">
    <property type="method" value="EM"/>
    <property type="resolution" value="3.50 A"/>
    <property type="chains" value="f=1-194"/>
</dbReference>
<dbReference type="PDB" id="5OOL">
    <property type="method" value="EM"/>
    <property type="resolution" value="3.06 A"/>
    <property type="chains" value="f=1-212"/>
</dbReference>
<dbReference type="PDB" id="5OOM">
    <property type="method" value="EM"/>
    <property type="resolution" value="3.03 A"/>
    <property type="chains" value="f=1-212"/>
</dbReference>
<dbReference type="PDB" id="6I9R">
    <property type="method" value="EM"/>
    <property type="resolution" value="3.90 A"/>
    <property type="chains" value="f=1-212"/>
</dbReference>
<dbReference type="PDB" id="6NU2">
    <property type="method" value="EM"/>
    <property type="resolution" value="3.90 A"/>
    <property type="chains" value="f=48-193"/>
</dbReference>
<dbReference type="PDB" id="6NU3">
    <property type="method" value="EM"/>
    <property type="resolution" value="4.40 A"/>
    <property type="chains" value="f=1-212"/>
</dbReference>
<dbReference type="PDB" id="6VLZ">
    <property type="method" value="EM"/>
    <property type="resolution" value="2.97 A"/>
    <property type="chains" value="f=1-194"/>
</dbReference>
<dbReference type="PDB" id="6VMI">
    <property type="method" value="EM"/>
    <property type="resolution" value="2.96 A"/>
    <property type="chains" value="f=1-194"/>
</dbReference>
<dbReference type="PDB" id="6ZM5">
    <property type="method" value="EM"/>
    <property type="resolution" value="2.89 A"/>
    <property type="chains" value="f=1-212"/>
</dbReference>
<dbReference type="PDB" id="6ZM6">
    <property type="method" value="EM"/>
    <property type="resolution" value="2.59 A"/>
    <property type="chains" value="f=1-212"/>
</dbReference>
<dbReference type="PDB" id="6ZS9">
    <property type="method" value="EM"/>
    <property type="resolution" value="4.00 A"/>
    <property type="chains" value="f=1-212"/>
</dbReference>
<dbReference type="PDB" id="6ZSA">
    <property type="method" value="EM"/>
    <property type="resolution" value="4.00 A"/>
    <property type="chains" value="f=1-212"/>
</dbReference>
<dbReference type="PDB" id="6ZSB">
    <property type="method" value="EM"/>
    <property type="resolution" value="4.50 A"/>
    <property type="chains" value="f=1-212"/>
</dbReference>
<dbReference type="PDB" id="6ZSC">
    <property type="method" value="EM"/>
    <property type="resolution" value="3.50 A"/>
    <property type="chains" value="f=1-212"/>
</dbReference>
<dbReference type="PDB" id="6ZSD">
    <property type="method" value="EM"/>
    <property type="resolution" value="3.70 A"/>
    <property type="chains" value="f=1-212"/>
</dbReference>
<dbReference type="PDB" id="6ZSE">
    <property type="method" value="EM"/>
    <property type="resolution" value="5.00 A"/>
    <property type="chains" value="f=1-212"/>
</dbReference>
<dbReference type="PDB" id="6ZSG">
    <property type="method" value="EM"/>
    <property type="resolution" value="4.00 A"/>
    <property type="chains" value="f=1-212"/>
</dbReference>
<dbReference type="PDB" id="7A5F">
    <property type="method" value="EM"/>
    <property type="resolution" value="4.40 A"/>
    <property type="chains" value="f3=1-212"/>
</dbReference>
<dbReference type="PDB" id="7A5G">
    <property type="method" value="EM"/>
    <property type="resolution" value="4.33 A"/>
    <property type="chains" value="f3=1-212"/>
</dbReference>
<dbReference type="PDB" id="7A5H">
    <property type="method" value="EM"/>
    <property type="resolution" value="3.30 A"/>
    <property type="chains" value="f=1-194"/>
</dbReference>
<dbReference type="PDB" id="7A5I">
    <property type="method" value="EM"/>
    <property type="resolution" value="3.70 A"/>
    <property type="chains" value="f3=1-194"/>
</dbReference>
<dbReference type="PDB" id="7A5J">
    <property type="method" value="EM"/>
    <property type="resolution" value="3.10 A"/>
    <property type="chains" value="f=1-194"/>
</dbReference>
<dbReference type="PDB" id="7A5K">
    <property type="method" value="EM"/>
    <property type="resolution" value="3.70 A"/>
    <property type="chains" value="f3=1-194"/>
</dbReference>
<dbReference type="PDB" id="7L08">
    <property type="method" value="EM"/>
    <property type="resolution" value="3.49 A"/>
    <property type="chains" value="f=1-194"/>
</dbReference>
<dbReference type="PDB" id="7L20">
    <property type="method" value="EM"/>
    <property type="resolution" value="3.15 A"/>
    <property type="chains" value="f=1-194"/>
</dbReference>
<dbReference type="PDB" id="7O9K">
    <property type="method" value="EM"/>
    <property type="resolution" value="3.10 A"/>
    <property type="chains" value="f=1-212"/>
</dbReference>
<dbReference type="PDB" id="7O9M">
    <property type="method" value="EM"/>
    <property type="resolution" value="2.50 A"/>
    <property type="chains" value="f=1-212"/>
</dbReference>
<dbReference type="PDB" id="7ODR">
    <property type="method" value="EM"/>
    <property type="resolution" value="2.90 A"/>
    <property type="chains" value="f=1-212"/>
</dbReference>
<dbReference type="PDB" id="7ODS">
    <property type="method" value="EM"/>
    <property type="resolution" value="3.10 A"/>
    <property type="chains" value="f=1-212"/>
</dbReference>
<dbReference type="PDB" id="7ODT">
    <property type="method" value="EM"/>
    <property type="resolution" value="3.10 A"/>
    <property type="chains" value="f=1-212"/>
</dbReference>
<dbReference type="PDB" id="7OF0">
    <property type="method" value="EM"/>
    <property type="resolution" value="2.20 A"/>
    <property type="chains" value="f=1-212"/>
</dbReference>
<dbReference type="PDB" id="7OF2">
    <property type="method" value="EM"/>
    <property type="resolution" value="2.70 A"/>
    <property type="chains" value="f=1-212"/>
</dbReference>
<dbReference type="PDB" id="7OF3">
    <property type="method" value="EM"/>
    <property type="resolution" value="2.70 A"/>
    <property type="chains" value="f=1-212"/>
</dbReference>
<dbReference type="PDB" id="7OF4">
    <property type="method" value="EM"/>
    <property type="resolution" value="2.70 A"/>
    <property type="chains" value="f=1-212"/>
</dbReference>
<dbReference type="PDB" id="7OF5">
    <property type="method" value="EM"/>
    <property type="resolution" value="2.90 A"/>
    <property type="chains" value="f=1-212"/>
</dbReference>
<dbReference type="PDB" id="7OF6">
    <property type="method" value="EM"/>
    <property type="resolution" value="2.60 A"/>
    <property type="chains" value="f=1-212"/>
</dbReference>
<dbReference type="PDB" id="7OF7">
    <property type="method" value="EM"/>
    <property type="resolution" value="2.50 A"/>
    <property type="chains" value="f=1-212"/>
</dbReference>
<dbReference type="PDB" id="7OG4">
    <property type="method" value="EM"/>
    <property type="resolution" value="3.80 A"/>
    <property type="chains" value="f=1-212"/>
</dbReference>
<dbReference type="PDB" id="7OI7">
    <property type="method" value="EM"/>
    <property type="resolution" value="3.50 A"/>
    <property type="chains" value="f=1-212"/>
</dbReference>
<dbReference type="PDB" id="7OI8">
    <property type="method" value="EM"/>
    <property type="resolution" value="3.50 A"/>
    <property type="chains" value="f=1-212"/>
</dbReference>
<dbReference type="PDB" id="7OI9">
    <property type="method" value="EM"/>
    <property type="resolution" value="3.30 A"/>
    <property type="chains" value="f=1-212"/>
</dbReference>
<dbReference type="PDB" id="7OIA">
    <property type="method" value="EM"/>
    <property type="resolution" value="3.20 A"/>
    <property type="chains" value="f=1-212"/>
</dbReference>
<dbReference type="PDB" id="7OIB">
    <property type="method" value="EM"/>
    <property type="resolution" value="3.30 A"/>
    <property type="chains" value="f=1-212"/>
</dbReference>
<dbReference type="PDB" id="7OIC">
    <property type="method" value="EM"/>
    <property type="resolution" value="3.10 A"/>
    <property type="chains" value="f=1-212"/>
</dbReference>
<dbReference type="PDB" id="7OID">
    <property type="method" value="EM"/>
    <property type="resolution" value="3.70 A"/>
    <property type="chains" value="f=1-212"/>
</dbReference>
<dbReference type="PDB" id="7OIE">
    <property type="method" value="EM"/>
    <property type="resolution" value="3.50 A"/>
    <property type="chains" value="f=1-212"/>
</dbReference>
<dbReference type="PDB" id="7PD3">
    <property type="method" value="EM"/>
    <property type="resolution" value="3.40 A"/>
    <property type="chains" value="f=1-212"/>
</dbReference>
<dbReference type="PDB" id="7PO4">
    <property type="method" value="EM"/>
    <property type="resolution" value="2.56 A"/>
    <property type="chains" value="f=1-212"/>
</dbReference>
<dbReference type="PDB" id="7QH7">
    <property type="method" value="EM"/>
    <property type="resolution" value="2.89 A"/>
    <property type="chains" value="f=48-64"/>
</dbReference>
<dbReference type="PDB" id="7QI4">
    <property type="method" value="EM"/>
    <property type="resolution" value="2.21 A"/>
    <property type="chains" value="f=1-212"/>
</dbReference>
<dbReference type="PDB" id="7QI5">
    <property type="method" value="EM"/>
    <property type="resolution" value="2.63 A"/>
    <property type="chains" value="f=1-212"/>
</dbReference>
<dbReference type="PDB" id="7QI6">
    <property type="method" value="EM"/>
    <property type="resolution" value="2.98 A"/>
    <property type="chains" value="f=1-212"/>
</dbReference>
<dbReference type="PDB" id="8ANY">
    <property type="method" value="EM"/>
    <property type="resolution" value="2.85 A"/>
    <property type="chains" value="f=1-212"/>
</dbReference>
<dbReference type="PDB" id="8K2A">
    <property type="method" value="EM"/>
    <property type="resolution" value="2.90 A"/>
    <property type="chains" value="Lv=1-212"/>
</dbReference>
<dbReference type="PDB" id="8K2B">
    <property type="method" value="EM"/>
    <property type="resolution" value="3.40 A"/>
    <property type="chains" value="Lv=1-212"/>
</dbReference>
<dbReference type="PDB" id="8OIR">
    <property type="method" value="EM"/>
    <property type="resolution" value="3.10 A"/>
    <property type="chains" value="Bw=1-212"/>
</dbReference>
<dbReference type="PDB" id="8OIT">
    <property type="method" value="EM"/>
    <property type="resolution" value="2.90 A"/>
    <property type="chains" value="Bw=1-212"/>
</dbReference>
<dbReference type="PDB" id="8PK0">
    <property type="method" value="EM"/>
    <property type="resolution" value="3.03 A"/>
    <property type="chains" value="f=1-212"/>
</dbReference>
<dbReference type="PDB" id="8QSJ">
    <property type="method" value="EM"/>
    <property type="resolution" value="3.00 A"/>
    <property type="chains" value="f=1-212"/>
</dbReference>
<dbReference type="PDB" id="8QU5">
    <property type="method" value="EM"/>
    <property type="resolution" value="2.42 A"/>
    <property type="chains" value="f=1-212"/>
</dbReference>
<dbReference type="PDB" id="8RRI">
    <property type="method" value="EM"/>
    <property type="resolution" value="2.40 A"/>
    <property type="chains" value="f=1-212"/>
</dbReference>
<dbReference type="PDB" id="8XT0">
    <property type="method" value="EM"/>
    <property type="resolution" value="3.20 A"/>
    <property type="chains" value="Lv=1-212"/>
</dbReference>
<dbReference type="PDB" id="8XT1">
    <property type="method" value="EM"/>
    <property type="resolution" value="3.10 A"/>
    <property type="chains" value="Lv=1-212"/>
</dbReference>
<dbReference type="PDB" id="8XT2">
    <property type="method" value="EM"/>
    <property type="resolution" value="3.30 A"/>
    <property type="chains" value="Lv=1-212"/>
</dbReference>
<dbReference type="PDB" id="8XT3">
    <property type="method" value="EM"/>
    <property type="resolution" value="3.10 A"/>
    <property type="chains" value="Lv=1-212"/>
</dbReference>
<dbReference type="PDBsum" id="3J7Y"/>
<dbReference type="PDBsum" id="3J9M"/>
<dbReference type="PDBsum" id="5OOL"/>
<dbReference type="PDBsum" id="5OOM"/>
<dbReference type="PDBsum" id="6I9R"/>
<dbReference type="PDBsum" id="6NU2"/>
<dbReference type="PDBsum" id="6NU3"/>
<dbReference type="PDBsum" id="6VLZ"/>
<dbReference type="PDBsum" id="6VMI"/>
<dbReference type="PDBsum" id="6ZM5"/>
<dbReference type="PDBsum" id="6ZM6"/>
<dbReference type="PDBsum" id="6ZS9"/>
<dbReference type="PDBsum" id="6ZSA"/>
<dbReference type="PDBsum" id="6ZSB"/>
<dbReference type="PDBsum" id="6ZSC"/>
<dbReference type="PDBsum" id="6ZSD"/>
<dbReference type="PDBsum" id="6ZSE"/>
<dbReference type="PDBsum" id="6ZSG"/>
<dbReference type="PDBsum" id="7A5F"/>
<dbReference type="PDBsum" id="7A5G"/>
<dbReference type="PDBsum" id="7A5H"/>
<dbReference type="PDBsum" id="7A5I"/>
<dbReference type="PDBsum" id="7A5J"/>
<dbReference type="PDBsum" id="7A5K"/>
<dbReference type="PDBsum" id="7L08"/>
<dbReference type="PDBsum" id="7L20"/>
<dbReference type="PDBsum" id="7O9K"/>
<dbReference type="PDBsum" id="7O9M"/>
<dbReference type="PDBsum" id="7ODR"/>
<dbReference type="PDBsum" id="7ODS"/>
<dbReference type="PDBsum" id="7ODT"/>
<dbReference type="PDBsum" id="7OF0"/>
<dbReference type="PDBsum" id="7OF2"/>
<dbReference type="PDBsum" id="7OF3"/>
<dbReference type="PDBsum" id="7OF4"/>
<dbReference type="PDBsum" id="7OF5"/>
<dbReference type="PDBsum" id="7OF6"/>
<dbReference type="PDBsum" id="7OF7"/>
<dbReference type="PDBsum" id="7OG4"/>
<dbReference type="PDBsum" id="7OI7"/>
<dbReference type="PDBsum" id="7OI8"/>
<dbReference type="PDBsum" id="7OI9"/>
<dbReference type="PDBsum" id="7OIA"/>
<dbReference type="PDBsum" id="7OIB"/>
<dbReference type="PDBsum" id="7OIC"/>
<dbReference type="PDBsum" id="7OID"/>
<dbReference type="PDBsum" id="7OIE"/>
<dbReference type="PDBsum" id="7PD3"/>
<dbReference type="PDBsum" id="7PO4"/>
<dbReference type="PDBsum" id="7QH7"/>
<dbReference type="PDBsum" id="7QI4"/>
<dbReference type="PDBsum" id="7QI5"/>
<dbReference type="PDBsum" id="7QI6"/>
<dbReference type="PDBsum" id="8ANY"/>
<dbReference type="PDBsum" id="8K2A"/>
<dbReference type="PDBsum" id="8K2B"/>
<dbReference type="PDBsum" id="8OIR"/>
<dbReference type="PDBsum" id="8OIT"/>
<dbReference type="PDBsum" id="8PK0"/>
<dbReference type="PDBsum" id="8QSJ"/>
<dbReference type="PDBsum" id="8QU5"/>
<dbReference type="PDBsum" id="8RRI"/>
<dbReference type="PDBsum" id="8XT0"/>
<dbReference type="PDBsum" id="8XT1"/>
<dbReference type="PDBsum" id="8XT2"/>
<dbReference type="PDBsum" id="8XT3"/>
<dbReference type="EMDB" id="EMD-0514"/>
<dbReference type="EMDB" id="EMD-0515"/>
<dbReference type="EMDB" id="EMD-11278"/>
<dbReference type="EMDB" id="EMD-11279"/>
<dbReference type="EMDB" id="EMD-11390"/>
<dbReference type="EMDB" id="EMD-11391"/>
<dbReference type="EMDB" id="EMD-11392"/>
<dbReference type="EMDB" id="EMD-11393"/>
<dbReference type="EMDB" id="EMD-11394"/>
<dbReference type="EMDB" id="EMD-11395"/>
<dbReference type="EMDB" id="EMD-11397"/>
<dbReference type="EMDB" id="EMD-11641"/>
<dbReference type="EMDB" id="EMD-11642"/>
<dbReference type="EMDB" id="EMD-11643"/>
<dbReference type="EMDB" id="EMD-11644"/>
<dbReference type="EMDB" id="EMD-11645"/>
<dbReference type="EMDB" id="EMD-11646"/>
<dbReference type="EMDB" id="EMD-12763"/>
<dbReference type="EMDB" id="EMD-12764"/>
<dbReference type="EMDB" id="EMD-12845"/>
<dbReference type="EMDB" id="EMD-12846"/>
<dbReference type="EMDB" id="EMD-12847"/>
<dbReference type="EMDB" id="EMD-12865"/>
<dbReference type="EMDB" id="EMD-12867"/>
<dbReference type="EMDB" id="EMD-12868"/>
<dbReference type="EMDB" id="EMD-12869"/>
<dbReference type="EMDB" id="EMD-12870"/>
<dbReference type="EMDB" id="EMD-12871"/>
<dbReference type="EMDB" id="EMD-12872"/>
<dbReference type="EMDB" id="EMD-12877"/>
<dbReference type="EMDB" id="EMD-12920"/>
<dbReference type="EMDB" id="EMD-12921"/>
<dbReference type="EMDB" id="EMD-12922"/>
<dbReference type="EMDB" id="EMD-12923"/>
<dbReference type="EMDB" id="EMD-12924"/>
<dbReference type="EMDB" id="EMD-12925"/>
<dbReference type="EMDB" id="EMD-12926"/>
<dbReference type="EMDB" id="EMD-12927"/>
<dbReference type="EMDB" id="EMD-13329"/>
<dbReference type="EMDB" id="EMD-13562"/>
<dbReference type="EMDB" id="EMD-13967"/>
<dbReference type="EMDB" id="EMD-13980"/>
<dbReference type="EMDB" id="EMD-13981"/>
<dbReference type="EMDB" id="EMD-13982"/>
<dbReference type="EMDB" id="EMD-15544"/>
<dbReference type="EMDB" id="EMD-16897"/>
<dbReference type="EMDB" id="EMD-16899"/>
<dbReference type="EMDB" id="EMD-17719"/>
<dbReference type="EMDB" id="EMD-19460"/>
<dbReference type="EMDB" id="EMD-21233"/>
<dbReference type="EMDB" id="EMD-21242"/>
<dbReference type="EMDB" id="EMD-23096"/>
<dbReference type="EMDB" id="EMD-23121"/>
<dbReference type="EMDB" id="EMD-36836"/>
<dbReference type="EMDB" id="EMD-36837"/>
<dbReference type="EMDB" id="EMD-3842"/>
<dbReference type="EMDB" id="EMD-3843"/>
<dbReference type="EMDB" id="EMD-38632"/>
<dbReference type="EMDB" id="EMD-38633"/>
<dbReference type="EMDB" id="EMD-38634"/>
<dbReference type="EMDB" id="EMD-38635"/>
<dbReference type="EMDB" id="EMD-4434"/>
<dbReference type="SMR" id="Q96GC5"/>
<dbReference type="BioGRID" id="119652">
    <property type="interactions" value="174"/>
</dbReference>
<dbReference type="ComplexPortal" id="CPX-5226">
    <property type="entry name" value="39S mitochondrial large ribosomal subunit"/>
</dbReference>
<dbReference type="CORUM" id="Q96GC5"/>
<dbReference type="FunCoup" id="Q96GC5">
    <property type="interactions" value="1074"/>
</dbReference>
<dbReference type="IntAct" id="Q96GC5">
    <property type="interactions" value="85"/>
</dbReference>
<dbReference type="MINT" id="Q96GC5"/>
<dbReference type="STRING" id="9606.ENSP00000308717"/>
<dbReference type="GlyGen" id="Q96GC5">
    <property type="glycosylation" value="1 site, 1 O-linked glycan (1 site)"/>
</dbReference>
<dbReference type="iPTMnet" id="Q96GC5"/>
<dbReference type="PhosphoSitePlus" id="Q96GC5"/>
<dbReference type="BioMuta" id="MRPL48"/>
<dbReference type="DMDM" id="118573683"/>
<dbReference type="jPOST" id="Q96GC5"/>
<dbReference type="MassIVE" id="Q96GC5"/>
<dbReference type="PaxDb" id="9606-ENSP00000308717"/>
<dbReference type="PeptideAtlas" id="Q96GC5"/>
<dbReference type="ProteomicsDB" id="4669"/>
<dbReference type="ProteomicsDB" id="76610">
    <molecule id="Q96GC5-1"/>
</dbReference>
<dbReference type="Pumba" id="Q96GC5"/>
<dbReference type="TopDownProteomics" id="Q96GC5-1">
    <molecule id="Q96GC5-1"/>
</dbReference>
<dbReference type="Antibodypedia" id="30982">
    <property type="antibodies" value="224 antibodies from 24 providers"/>
</dbReference>
<dbReference type="DNASU" id="51642"/>
<dbReference type="Ensembl" id="ENST00000310614.12">
    <molecule id="Q96GC5-1"/>
    <property type="protein sequence ID" value="ENSP00000308717.7"/>
    <property type="gene ID" value="ENSG00000175581.14"/>
</dbReference>
<dbReference type="GeneID" id="51642"/>
<dbReference type="KEGG" id="hsa:51642"/>
<dbReference type="MANE-Select" id="ENST00000310614.12">
    <property type="protein sequence ID" value="ENSP00000308717.7"/>
    <property type="RefSeq nucleotide sequence ID" value="NM_016055.6"/>
    <property type="RefSeq protein sequence ID" value="NP_057139.1"/>
</dbReference>
<dbReference type="UCSC" id="uc001ouh.5">
    <molecule id="Q96GC5-1"/>
    <property type="organism name" value="human"/>
</dbReference>
<dbReference type="AGR" id="HGNC:16653"/>
<dbReference type="CTD" id="51642"/>
<dbReference type="DisGeNET" id="51642"/>
<dbReference type="GeneCards" id="MRPL48"/>
<dbReference type="HGNC" id="HGNC:16653">
    <property type="gene designation" value="MRPL48"/>
</dbReference>
<dbReference type="HPA" id="ENSG00000175581">
    <property type="expression patterns" value="Low tissue specificity"/>
</dbReference>
<dbReference type="MIM" id="611853">
    <property type="type" value="gene"/>
</dbReference>
<dbReference type="neXtProt" id="NX_Q96GC5"/>
<dbReference type="OpenTargets" id="ENSG00000175581"/>
<dbReference type="PharmGKB" id="PA30980"/>
<dbReference type="VEuPathDB" id="HostDB:ENSG00000175581"/>
<dbReference type="eggNOG" id="KOG4060">
    <property type="taxonomic scope" value="Eukaryota"/>
</dbReference>
<dbReference type="GeneTree" id="ENSGT00390000012955"/>
<dbReference type="HOGENOM" id="CLU_095928_0_0_1"/>
<dbReference type="InParanoid" id="Q96GC5"/>
<dbReference type="OMA" id="MKQHTEA"/>
<dbReference type="OrthoDB" id="5984298at2759"/>
<dbReference type="PAN-GO" id="Q96GC5">
    <property type="GO annotations" value="1 GO annotation based on evolutionary models"/>
</dbReference>
<dbReference type="PhylomeDB" id="Q96GC5"/>
<dbReference type="TreeFam" id="TF315130"/>
<dbReference type="PathwayCommons" id="Q96GC5"/>
<dbReference type="Reactome" id="R-HSA-5368286">
    <property type="pathway name" value="Mitochondrial translation initiation"/>
</dbReference>
<dbReference type="Reactome" id="R-HSA-5389840">
    <property type="pathway name" value="Mitochondrial translation elongation"/>
</dbReference>
<dbReference type="Reactome" id="R-HSA-5419276">
    <property type="pathway name" value="Mitochondrial translation termination"/>
</dbReference>
<dbReference type="SignaLink" id="Q96GC5"/>
<dbReference type="SIGNOR" id="Q96GC5"/>
<dbReference type="BioGRID-ORCS" id="51642">
    <property type="hits" value="264 hits in 1123 CRISPR screens"/>
</dbReference>
<dbReference type="ChiTaRS" id="MRPL48">
    <property type="organism name" value="human"/>
</dbReference>
<dbReference type="EvolutionaryTrace" id="Q96GC5"/>
<dbReference type="GenomeRNAi" id="51642"/>
<dbReference type="Pharos" id="Q96GC5">
    <property type="development level" value="Tdark"/>
</dbReference>
<dbReference type="PRO" id="PR:Q96GC5"/>
<dbReference type="Proteomes" id="UP000005640">
    <property type="component" value="Chromosome 11"/>
</dbReference>
<dbReference type="RNAct" id="Q96GC5">
    <property type="molecule type" value="protein"/>
</dbReference>
<dbReference type="Bgee" id="ENSG00000175581">
    <property type="expression patterns" value="Expressed in C1 segment of cervical spinal cord and 206 other cell types or tissues"/>
</dbReference>
<dbReference type="ExpressionAtlas" id="Q96GC5">
    <property type="expression patterns" value="baseline and differential"/>
</dbReference>
<dbReference type="GO" id="GO:0005743">
    <property type="term" value="C:mitochondrial inner membrane"/>
    <property type="evidence" value="ECO:0000304"/>
    <property type="project" value="Reactome"/>
</dbReference>
<dbReference type="GO" id="GO:0005762">
    <property type="term" value="C:mitochondrial large ribosomal subunit"/>
    <property type="evidence" value="ECO:0000314"/>
    <property type="project" value="UniProtKB"/>
</dbReference>
<dbReference type="GO" id="GO:0005761">
    <property type="term" value="C:mitochondrial ribosome"/>
    <property type="evidence" value="ECO:0000314"/>
    <property type="project" value="UniProtKB"/>
</dbReference>
<dbReference type="GO" id="GO:0005739">
    <property type="term" value="C:mitochondrion"/>
    <property type="evidence" value="ECO:0000314"/>
    <property type="project" value="HPA"/>
</dbReference>
<dbReference type="GO" id="GO:0032543">
    <property type="term" value="P:mitochondrial translation"/>
    <property type="evidence" value="ECO:0000303"/>
    <property type="project" value="ComplexPortal"/>
</dbReference>
<dbReference type="FunFam" id="3.30.70.600:FF:000006">
    <property type="entry name" value="39S ribosomal protein L48, mitochondrial"/>
    <property type="match status" value="1"/>
</dbReference>
<dbReference type="Gene3D" id="3.30.70.600">
    <property type="entry name" value="Ribosomal protein S10 domain"/>
    <property type="match status" value="1"/>
</dbReference>
<dbReference type="InterPro" id="IPR027487">
    <property type="entry name" value="Ribosomal_mL48"/>
</dbReference>
<dbReference type="InterPro" id="IPR027486">
    <property type="entry name" value="Ribosomal_uS10_dom"/>
</dbReference>
<dbReference type="InterPro" id="IPR036838">
    <property type="entry name" value="Ribosomal_uS10_dom_sf"/>
</dbReference>
<dbReference type="PANTHER" id="PTHR13473:SF0">
    <property type="entry name" value="LARGE RIBOSOMAL SUBUNIT PROTEIN ML48"/>
    <property type="match status" value="1"/>
</dbReference>
<dbReference type="PANTHER" id="PTHR13473">
    <property type="entry name" value="MITOCHONDRIAL RIBOSOMAL PROTEIN L48"/>
    <property type="match status" value="1"/>
</dbReference>
<dbReference type="Pfam" id="PF00338">
    <property type="entry name" value="Ribosomal_S10"/>
    <property type="match status" value="1"/>
</dbReference>
<dbReference type="SMART" id="SM01403">
    <property type="entry name" value="Ribosomal_S10"/>
    <property type="match status" value="1"/>
</dbReference>
<dbReference type="SUPFAM" id="SSF54999">
    <property type="entry name" value="Ribosomal protein S10"/>
    <property type="match status" value="1"/>
</dbReference>
<keyword id="KW-0002">3D-structure</keyword>
<keyword id="KW-0025">Alternative splicing</keyword>
<keyword id="KW-0496">Mitochondrion</keyword>
<keyword id="KW-1267">Proteomics identification</keyword>
<keyword id="KW-1185">Reference proteome</keyword>
<keyword id="KW-0687">Ribonucleoprotein</keyword>
<keyword id="KW-0689">Ribosomal protein</keyword>
<keyword id="KW-0809">Transit peptide</keyword>
<accession>Q96GC5</accession>
<accession>B4DN34</accession>
<accession>Q49AK7</accession>
<accession>Q4U2Q4</accession>
<accession>Q9P091</accession>
<accession>Q9Y5J0</accession>
<feature type="transit peptide" description="Mitochondrion" evidence="3">
    <location>
        <begin position="1"/>
        <end position="28"/>
    </location>
</feature>
<feature type="chain" id="PRO_0000261657" description="Large ribosomal subunit protein mL48">
    <location>
        <begin position="29"/>
        <end position="212"/>
    </location>
</feature>
<feature type="modified residue" description="N6-succinyllysine" evidence="2">
    <location>
        <position position="199"/>
    </location>
</feature>
<feature type="splice variant" id="VSP_054130" description="In isoform 2." evidence="9">
    <original>MSGTLEKVLCLRNNTIFKQAFSLLRFRTSGEKPIYSV</original>
    <variation>MGLSSCRKTSSGLPLILHY</variation>
    <location>
        <begin position="1"/>
        <end position="37"/>
    </location>
</feature>
<feature type="sequence variant" id="VAR_029473" description="In dbSNP:rs17850551." evidence="4">
    <original>E</original>
    <variation>G</variation>
    <location>
        <position position="6"/>
    </location>
</feature>
<feature type="turn" evidence="17">
    <location>
        <begin position="52"/>
        <end position="57"/>
    </location>
</feature>
<feature type="helix" evidence="17">
    <location>
        <begin position="60"/>
        <end position="62"/>
    </location>
</feature>
<feature type="strand" evidence="18">
    <location>
        <begin position="80"/>
        <end position="84"/>
    </location>
</feature>
<feature type="strand" evidence="17">
    <location>
        <begin position="91"/>
        <end position="98"/>
    </location>
</feature>
<feature type="helix" evidence="17">
    <location>
        <begin position="100"/>
        <end position="116"/>
    </location>
</feature>
<feature type="strand" evidence="20">
    <location>
        <begin position="126"/>
        <end position="131"/>
    </location>
</feature>
<feature type="strand" evidence="17">
    <location>
        <begin position="151"/>
        <end position="160"/>
    </location>
</feature>
<feature type="helix" evidence="17">
    <location>
        <begin position="164"/>
        <end position="177"/>
    </location>
</feature>
<feature type="strand" evidence="19">
    <location>
        <begin position="179"/>
        <end position="181"/>
    </location>
</feature>